<evidence type="ECO:0000250" key="1">
    <source>
        <dbReference type="UniProtKB" id="Q16099"/>
    </source>
</evidence>
<evidence type="ECO:0000250" key="2">
    <source>
        <dbReference type="UniProtKB" id="Q8BMF5"/>
    </source>
</evidence>
<evidence type="ECO:0000255" key="3"/>
<evidence type="ECO:0000256" key="4">
    <source>
        <dbReference type="SAM" id="MobiDB-lite"/>
    </source>
</evidence>
<evidence type="ECO:0000269" key="5">
    <source>
    </source>
</evidence>
<evidence type="ECO:0000269" key="6">
    <source>
    </source>
</evidence>
<evidence type="ECO:0000269" key="7">
    <source>
    </source>
</evidence>
<evidence type="ECO:0000269" key="8">
    <source>
    </source>
</evidence>
<evidence type="ECO:0000305" key="9"/>
<evidence type="ECO:0007744" key="10">
    <source>
        <dbReference type="PDB" id="5IKB"/>
    </source>
</evidence>
<evidence type="ECO:0007829" key="11">
    <source>
        <dbReference type="PDB" id="5IKB"/>
    </source>
</evidence>
<sequence length="956" mass="107223">MPRVSAPLVLLPAWLLMVACSPHSLRIAAILDDPMECSRGERLSITLAKNRINRAPERLGKAKVEVDIFELLRDSEYETAETMCQILPKGVVAVLGPSSSPASSSIISNICGEKEVPHFKVAPEEFVRFQLQRFTTLNLHPSNTDISVAVAGILNFFNCTTACLICAKAECLLNLEKLLRQFLISKDTLSVRMLDDTRDPTPLLKEIRDDKTATIIIHANASMSHTILLKAAELGMVSAYYTYIFTNLEFSLQRMDSLVDDRVNILGFSIFNQSHAFFQEFSQSLNQSWQENCDHVPFTGPALSSALLFDAVYAVVTAVQELNRSQEIGVKPLSCGSAQIWQHGTSLMNYLRMVELEGLTGHIEFNSKGQRSNYALKILQFTRNGFRQIGQWHVAEGLSMDSRLYASNISDSLFNTTLVVTTILENPYLMLKGNHQDMEGNDRYEGFCVDMLKELAEILRFNYKIRLVGDGVYGVPEANGTWTGMVGELIARKADLAVAGLTITAEREKVIDFSKPFMTLGISILYRVHMGRRPGYFSSLDPFSPGVWLFMLLAYLAVSCVLFLVARLTPYEWYSPHPCAQGRCNLLVNQYSLGNSLWFPVGGFMQQGSTIAPRALSTRCVSGVWWAFTLIIISSYTANLAAFLTVQRMEVPIESVDDLADQTAIEYGTIHGGSSMTFFQNSRYQTYQRMWNYMYSKQPSVFVKSTEEGIARVLNSNYAFLLESTMNEYYRQRNCNLTQIGGLLDTKGYGIGMPVGSVFRDEFDLAILQLQENNRLEILKRKWWEGGKCPKEEDHRAKGLGMENIGGIFVVLICGLIVAIFMAMLEFLWTLRHSEASEVSVCQEMMTELRSIILCQDNIHPRRRRSGGLPPQPPVLEERRPRGTATLSNGKLCGAGEPDQLAQRLAQEAALVARGCTHIRVCPECRRFQGLRARPSPARSEESLEWDKTTNSSEPE</sequence>
<reference key="1">
    <citation type="journal article" date="1991" name="Nature">
        <title>Cloning of a putative high-affinity kainate receptor expressed predominantly in hippocampal CA3 cells.</title>
        <authorList>
            <person name="Werner P."/>
            <person name="Voigt M."/>
            <person name="Keinaenen K."/>
            <person name="Wisden W."/>
            <person name="Seeburg P.H."/>
        </authorList>
    </citation>
    <scope>NUCLEOTIDE SEQUENCE [MRNA]</scope>
    <scope>FUNCTION</scope>
    <scope>TISSUE SPECIFICITY</scope>
    <scope>DEVELOPMENTAL STAGE</scope>
    <source>
        <tissue>Brain</tissue>
    </source>
</reference>
<reference key="2">
    <citation type="submission" date="1994-05" db="EMBL/GenBank/DDBJ databases">
        <authorList>
            <person name="Boulter J."/>
            <person name="Pecht G."/>
        </authorList>
    </citation>
    <scope>NUCLEOTIDE SEQUENCE [MRNA]</scope>
    <source>
        <strain>Sprague-Dawley</strain>
        <tissue>Brain</tissue>
    </source>
</reference>
<reference key="3">
    <citation type="journal article" date="1997" name="Neuron">
        <title>Rat GluR7 and a carboxy-terminal splice variant, GluR7b, are functional kainate receptor subunits with a low sensitivity to glutamate.</title>
        <authorList>
            <person name="Schiffer H.H."/>
            <person name="Swanson G.T."/>
            <person name="Heinemann S.F."/>
        </authorList>
    </citation>
    <scope>FUNCTION</scope>
    <scope>SUBUNIT</scope>
    <source>
        <strain>Sprague-Dawley</strain>
        <tissue>Brain</tissue>
    </source>
</reference>
<reference key="4">
    <citation type="journal article" date="2014" name="Neuroscience">
        <title>Contributions of different kainate receptor subunits to the properties of recombinant homomeric and heteromeric receptors.</title>
        <authorList>
            <person name="Fisher M.T."/>
            <person name="Fisher J.L."/>
        </authorList>
    </citation>
    <scope>FUNCTION</scope>
    <scope>SUBUNIT</scope>
</reference>
<reference evidence="10" key="5">
    <citation type="journal article" date="2016" name="Structure">
        <title>The Structure of a High-Affinity Kainate Receptor: GluK4 Ligand-Binding Domain Crystallized with Kainate.</title>
        <authorList>
            <person name="Kristensen O."/>
            <person name="Kristensen L.B."/>
            <person name="Mollerud S."/>
            <person name="Frydenvang K."/>
            <person name="Pickering D.S."/>
            <person name="Kastrup J.S."/>
        </authorList>
    </citation>
    <scope>X-RAY CRYSTALLOGRAPHY (2.05 ANGSTROMS) OF 415-526 AND 652-790</scope>
    <scope>SUBUNIT</scope>
    <scope>GLUTAMATE-BINDING</scope>
</reference>
<gene>
    <name type="primary">Grik4</name>
</gene>
<dbReference type="EMBL" id="X59996">
    <property type="protein sequence ID" value="CAA42615.1"/>
    <property type="molecule type" value="mRNA"/>
</dbReference>
<dbReference type="EMBL" id="U08257">
    <property type="protein sequence ID" value="AAA17830.1"/>
    <property type="molecule type" value="mRNA"/>
</dbReference>
<dbReference type="PIR" id="JS0685">
    <property type="entry name" value="JS0685"/>
</dbReference>
<dbReference type="RefSeq" id="NP_036704.1">
    <property type="nucleotide sequence ID" value="NM_012572.1"/>
</dbReference>
<dbReference type="RefSeq" id="XP_017450943.1">
    <property type="nucleotide sequence ID" value="XM_017595454.1"/>
</dbReference>
<dbReference type="RefSeq" id="XP_017450944.1">
    <property type="nucleotide sequence ID" value="XM_017595455.1"/>
</dbReference>
<dbReference type="PDB" id="5IKB">
    <property type="method" value="X-ray"/>
    <property type="resolution" value="2.05 A"/>
    <property type="chains" value="A=415-526, A=652-790"/>
</dbReference>
<dbReference type="PDBsum" id="5IKB"/>
<dbReference type="SMR" id="Q01812"/>
<dbReference type="CORUM" id="Q01812"/>
<dbReference type="FunCoup" id="Q01812">
    <property type="interactions" value="529"/>
</dbReference>
<dbReference type="STRING" id="10116.ENSRNOP00000047794"/>
<dbReference type="BindingDB" id="Q01812"/>
<dbReference type="ChEMBL" id="CHEMBL3044"/>
<dbReference type="DrugCentral" id="Q01812"/>
<dbReference type="GlyCosmos" id="Q01812">
    <property type="glycosylation" value="9 sites, No reported glycans"/>
</dbReference>
<dbReference type="GlyGen" id="Q01812">
    <property type="glycosylation" value="9 sites"/>
</dbReference>
<dbReference type="PhosphoSitePlus" id="Q01812"/>
<dbReference type="PaxDb" id="10116-ENSRNOP00000047794"/>
<dbReference type="GeneID" id="24406"/>
<dbReference type="KEGG" id="rno:24406"/>
<dbReference type="UCSC" id="RGD:2734">
    <property type="organism name" value="rat"/>
</dbReference>
<dbReference type="AGR" id="RGD:2734"/>
<dbReference type="CTD" id="2900"/>
<dbReference type="RGD" id="2734">
    <property type="gene designation" value="Grik4"/>
</dbReference>
<dbReference type="eggNOG" id="KOG1052">
    <property type="taxonomic scope" value="Eukaryota"/>
</dbReference>
<dbReference type="InParanoid" id="Q01812"/>
<dbReference type="OrthoDB" id="5984008at2759"/>
<dbReference type="PhylomeDB" id="Q01812"/>
<dbReference type="Reactome" id="R-RNO-451308">
    <property type="pathway name" value="Activation of Ca-permeable Kainate Receptor"/>
</dbReference>
<dbReference type="PRO" id="PR:Q01812"/>
<dbReference type="Proteomes" id="UP000002494">
    <property type="component" value="Unplaced"/>
</dbReference>
<dbReference type="GO" id="GO:0030424">
    <property type="term" value="C:axon"/>
    <property type="evidence" value="ECO:0000314"/>
    <property type="project" value="RGD"/>
</dbReference>
<dbReference type="GO" id="GO:0030425">
    <property type="term" value="C:dendrite"/>
    <property type="evidence" value="ECO:0000314"/>
    <property type="project" value="RGD"/>
</dbReference>
<dbReference type="GO" id="GO:0098978">
    <property type="term" value="C:glutamatergic synapse"/>
    <property type="evidence" value="ECO:0000314"/>
    <property type="project" value="SynGO"/>
</dbReference>
<dbReference type="GO" id="GO:0098686">
    <property type="term" value="C:hippocampal mossy fiber to CA3 synapse"/>
    <property type="evidence" value="ECO:0000266"/>
    <property type="project" value="RGD"/>
</dbReference>
<dbReference type="GO" id="GO:0008328">
    <property type="term" value="C:ionotropic glutamate receptor complex"/>
    <property type="evidence" value="ECO:0000304"/>
    <property type="project" value="RGD"/>
</dbReference>
<dbReference type="GO" id="GO:0032983">
    <property type="term" value="C:kainate selective glutamate receptor complex"/>
    <property type="evidence" value="ECO:0000266"/>
    <property type="project" value="RGD"/>
</dbReference>
<dbReference type="GO" id="GO:0016020">
    <property type="term" value="C:membrane"/>
    <property type="evidence" value="ECO:0000266"/>
    <property type="project" value="RGD"/>
</dbReference>
<dbReference type="GO" id="GO:0043204">
    <property type="term" value="C:perikaryon"/>
    <property type="evidence" value="ECO:0000314"/>
    <property type="project" value="RGD"/>
</dbReference>
<dbReference type="GO" id="GO:0005886">
    <property type="term" value="C:plasma membrane"/>
    <property type="evidence" value="ECO:0000318"/>
    <property type="project" value="GO_Central"/>
</dbReference>
<dbReference type="GO" id="GO:0098839">
    <property type="term" value="C:postsynaptic density membrane"/>
    <property type="evidence" value="ECO:0000318"/>
    <property type="project" value="GO_Central"/>
</dbReference>
<dbReference type="GO" id="GO:0045211">
    <property type="term" value="C:postsynaptic membrane"/>
    <property type="evidence" value="ECO:0000266"/>
    <property type="project" value="RGD"/>
</dbReference>
<dbReference type="GO" id="GO:0042734">
    <property type="term" value="C:presynaptic membrane"/>
    <property type="evidence" value="ECO:0000314"/>
    <property type="project" value="SynGO"/>
</dbReference>
<dbReference type="GO" id="GO:0045202">
    <property type="term" value="C:synapse"/>
    <property type="evidence" value="ECO:0000266"/>
    <property type="project" value="RGD"/>
</dbReference>
<dbReference type="GO" id="GO:0043195">
    <property type="term" value="C:terminal bouton"/>
    <property type="evidence" value="ECO:0000314"/>
    <property type="project" value="RGD"/>
</dbReference>
<dbReference type="GO" id="GO:0004970">
    <property type="term" value="F:glutamate-gated receptor activity"/>
    <property type="evidence" value="ECO:0000304"/>
    <property type="project" value="RGD"/>
</dbReference>
<dbReference type="GO" id="GO:0015277">
    <property type="term" value="F:kainate selective glutamate receptor activity"/>
    <property type="evidence" value="ECO:0000318"/>
    <property type="project" value="GO_Central"/>
</dbReference>
<dbReference type="GO" id="GO:0099507">
    <property type="term" value="F:ligand-gated monoatomic ion channel activity involved in regulation of presynaptic membrane potential"/>
    <property type="evidence" value="ECO:0000266"/>
    <property type="project" value="RGD"/>
</dbReference>
<dbReference type="GO" id="GO:1904315">
    <property type="term" value="F:transmitter-gated monoatomic ion channel activity involved in regulation of postsynaptic membrane potential"/>
    <property type="evidence" value="ECO:0000318"/>
    <property type="project" value="GO_Central"/>
</dbReference>
<dbReference type="GO" id="GO:0007268">
    <property type="term" value="P:chemical synaptic transmission"/>
    <property type="evidence" value="ECO:0000304"/>
    <property type="project" value="RGD"/>
</dbReference>
<dbReference type="GO" id="GO:0050804">
    <property type="term" value="P:modulation of chemical synaptic transmission"/>
    <property type="evidence" value="ECO:0000318"/>
    <property type="project" value="GO_Central"/>
</dbReference>
<dbReference type="GO" id="GO:0006811">
    <property type="term" value="P:monoatomic ion transport"/>
    <property type="evidence" value="ECO:0000304"/>
    <property type="project" value="RGD"/>
</dbReference>
<dbReference type="GO" id="GO:0035249">
    <property type="term" value="P:synaptic transmission, glutamatergic"/>
    <property type="evidence" value="ECO:0000318"/>
    <property type="project" value="GO_Central"/>
</dbReference>
<dbReference type="CDD" id="cd13724">
    <property type="entry name" value="PBP2_iGluR_kainate_KA1"/>
    <property type="match status" value="1"/>
</dbReference>
<dbReference type="FunFam" id="3.40.190.10:FF:000060">
    <property type="entry name" value="Glutamate receptor ionotropic, kainate 1"/>
    <property type="match status" value="1"/>
</dbReference>
<dbReference type="FunFam" id="3.40.190.10:FF:000072">
    <property type="entry name" value="glutamate receptor ionotropic, kainate 4"/>
    <property type="match status" value="1"/>
</dbReference>
<dbReference type="FunFam" id="3.40.50.2300:FF:000059">
    <property type="entry name" value="Glutamate receptor, ionotropic, kainate 4"/>
    <property type="match status" value="1"/>
</dbReference>
<dbReference type="FunFam" id="1.10.287.70:FF:000010">
    <property type="entry name" value="Putative glutamate receptor ionotropic kainate 1"/>
    <property type="match status" value="1"/>
</dbReference>
<dbReference type="Gene3D" id="3.40.50.2300">
    <property type="match status" value="2"/>
</dbReference>
<dbReference type="Gene3D" id="3.40.190.10">
    <property type="entry name" value="Periplasmic binding protein-like II"/>
    <property type="match status" value="3"/>
</dbReference>
<dbReference type="InterPro" id="IPR001828">
    <property type="entry name" value="ANF_lig-bd_rcpt"/>
</dbReference>
<dbReference type="InterPro" id="IPR019594">
    <property type="entry name" value="Glu/Gly-bd"/>
</dbReference>
<dbReference type="InterPro" id="IPR001508">
    <property type="entry name" value="Iono_Glu_rcpt_met"/>
</dbReference>
<dbReference type="InterPro" id="IPR015683">
    <property type="entry name" value="Ionotropic_Glu_rcpt"/>
</dbReference>
<dbReference type="InterPro" id="IPR001320">
    <property type="entry name" value="Iontro_rcpt_C"/>
</dbReference>
<dbReference type="InterPro" id="IPR028082">
    <property type="entry name" value="Peripla_BP_I"/>
</dbReference>
<dbReference type="PANTHER" id="PTHR18966">
    <property type="entry name" value="IONOTROPIC GLUTAMATE RECEPTOR"/>
    <property type="match status" value="1"/>
</dbReference>
<dbReference type="Pfam" id="PF01094">
    <property type="entry name" value="ANF_receptor"/>
    <property type="match status" value="1"/>
</dbReference>
<dbReference type="Pfam" id="PF00060">
    <property type="entry name" value="Lig_chan"/>
    <property type="match status" value="1"/>
</dbReference>
<dbReference type="Pfam" id="PF10613">
    <property type="entry name" value="Lig_chan-Glu_bd"/>
    <property type="match status" value="1"/>
</dbReference>
<dbReference type="PRINTS" id="PR00177">
    <property type="entry name" value="NMDARECEPTOR"/>
</dbReference>
<dbReference type="SMART" id="SM00918">
    <property type="entry name" value="Lig_chan-Glu_bd"/>
    <property type="match status" value="1"/>
</dbReference>
<dbReference type="SMART" id="SM00079">
    <property type="entry name" value="PBPe"/>
    <property type="match status" value="1"/>
</dbReference>
<dbReference type="SUPFAM" id="SSF53822">
    <property type="entry name" value="Periplasmic binding protein-like I"/>
    <property type="match status" value="1"/>
</dbReference>
<dbReference type="SUPFAM" id="SSF53850">
    <property type="entry name" value="Periplasmic binding protein-like II"/>
    <property type="match status" value="1"/>
</dbReference>
<proteinExistence type="evidence at protein level"/>
<protein>
    <recommendedName>
        <fullName>Glutamate receptor ionotropic, kainate 4</fullName>
        <shortName>GluK4</shortName>
    </recommendedName>
    <alternativeName>
        <fullName>Glutamate receptor KA-1</fullName>
        <shortName>KA1</shortName>
    </alternativeName>
</protein>
<organism>
    <name type="scientific">Rattus norvegicus</name>
    <name type="common">Rat</name>
    <dbReference type="NCBI Taxonomy" id="10116"/>
    <lineage>
        <taxon>Eukaryota</taxon>
        <taxon>Metazoa</taxon>
        <taxon>Chordata</taxon>
        <taxon>Craniata</taxon>
        <taxon>Vertebrata</taxon>
        <taxon>Euteleostomi</taxon>
        <taxon>Mammalia</taxon>
        <taxon>Eutheria</taxon>
        <taxon>Euarchontoglires</taxon>
        <taxon>Glires</taxon>
        <taxon>Rodentia</taxon>
        <taxon>Myomorpha</taxon>
        <taxon>Muroidea</taxon>
        <taxon>Muridae</taxon>
        <taxon>Murinae</taxon>
        <taxon>Rattus</taxon>
    </lineage>
</organism>
<feature type="signal peptide" evidence="3">
    <location>
        <begin position="1"/>
        <end position="20"/>
    </location>
</feature>
<feature type="chain" id="PRO_0000011551" description="Glutamate receptor ionotropic, kainate 4">
    <location>
        <begin position="21"/>
        <end position="956"/>
    </location>
</feature>
<feature type="topological domain" description="Extracellular" evidence="3">
    <location>
        <begin position="21"/>
        <end position="545"/>
    </location>
</feature>
<feature type="transmembrane region" description="Helical" evidence="3">
    <location>
        <begin position="546"/>
        <end position="566"/>
    </location>
</feature>
<feature type="topological domain" description="Cytoplasmic" evidence="3">
    <location>
        <begin position="567"/>
        <end position="623"/>
    </location>
</feature>
<feature type="transmembrane region" description="Helical" evidence="3">
    <location>
        <begin position="624"/>
        <end position="644"/>
    </location>
</feature>
<feature type="topological domain" description="Extracellular" evidence="3">
    <location>
        <begin position="645"/>
        <end position="804"/>
    </location>
</feature>
<feature type="transmembrane region" description="Helical" evidence="3">
    <location>
        <begin position="805"/>
        <end position="825"/>
    </location>
</feature>
<feature type="topological domain" description="Cytoplasmic" evidence="3">
    <location>
        <begin position="826"/>
        <end position="956"/>
    </location>
</feature>
<feature type="region of interest" description="Disordered" evidence="4">
    <location>
        <begin position="931"/>
        <end position="956"/>
    </location>
</feature>
<feature type="compositionally biased region" description="Basic and acidic residues" evidence="4">
    <location>
        <begin position="939"/>
        <end position="948"/>
    </location>
</feature>
<feature type="binding site" evidence="7 10">
    <location>
        <position position="500"/>
    </location>
    <ligand>
        <name>L-glutamate</name>
        <dbReference type="ChEBI" id="CHEBI:29985"/>
    </ligand>
</feature>
<feature type="binding site" evidence="7 10">
    <location>
        <position position="502"/>
    </location>
    <ligand>
        <name>L-glutamate</name>
        <dbReference type="ChEBI" id="CHEBI:29985"/>
    </ligand>
</feature>
<feature type="binding site" evidence="7 10">
    <location>
        <position position="507"/>
    </location>
    <ligand>
        <name>L-glutamate</name>
        <dbReference type="ChEBI" id="CHEBI:29985"/>
    </ligand>
</feature>
<feature type="binding site" evidence="7 10">
    <location>
        <position position="674"/>
    </location>
    <ligand>
        <name>L-glutamate</name>
        <dbReference type="ChEBI" id="CHEBI:29985"/>
    </ligand>
</feature>
<feature type="binding site" evidence="7 10">
    <location>
        <position position="675"/>
    </location>
    <ligand>
        <name>L-glutamate</name>
        <dbReference type="ChEBI" id="CHEBI:29985"/>
    </ligand>
</feature>
<feature type="binding site" evidence="7 10">
    <location>
        <position position="723"/>
    </location>
    <ligand>
        <name>L-glutamate</name>
        <dbReference type="ChEBI" id="CHEBI:29985"/>
    </ligand>
</feature>
<feature type="glycosylation site" description="N-linked (GlcNAc...) asparagine" evidence="3">
    <location>
        <position position="158"/>
    </location>
</feature>
<feature type="glycosylation site" description="N-linked (GlcNAc...) asparagine" evidence="3">
    <location>
        <position position="220"/>
    </location>
</feature>
<feature type="glycosylation site" description="N-linked (GlcNAc...) asparagine" evidence="3">
    <location>
        <position position="272"/>
    </location>
</feature>
<feature type="glycosylation site" description="N-linked (GlcNAc...) asparagine" evidence="3">
    <location>
        <position position="286"/>
    </location>
</feature>
<feature type="glycosylation site" description="N-linked (GlcNAc...) asparagine" evidence="3">
    <location>
        <position position="323"/>
    </location>
</feature>
<feature type="glycosylation site" description="N-linked (GlcNAc...) asparagine" evidence="3">
    <location>
        <position position="408"/>
    </location>
</feature>
<feature type="glycosylation site" description="N-linked (GlcNAc...) asparagine" evidence="3">
    <location>
        <position position="415"/>
    </location>
</feature>
<feature type="glycosylation site" description="N-linked (GlcNAc...) asparagine" evidence="3">
    <location>
        <position position="479"/>
    </location>
</feature>
<feature type="glycosylation site" description="N-linked (GlcNAc...) asparagine" evidence="3">
    <location>
        <position position="736"/>
    </location>
</feature>
<feature type="sequence conflict" description="In Ref. 2; AAA17830." evidence="9" ref="2">
    <original>S</original>
    <variation>F</variation>
    <location>
        <position position="539"/>
    </location>
</feature>
<feature type="strand" evidence="11">
    <location>
        <begin position="418"/>
        <end position="422"/>
    </location>
</feature>
<feature type="turn" evidence="11">
    <location>
        <begin position="426"/>
        <end position="428"/>
    </location>
</feature>
<feature type="strand" evidence="11">
    <location>
        <begin position="429"/>
        <end position="431"/>
    </location>
</feature>
<feature type="helix" evidence="11">
    <location>
        <begin position="435"/>
        <end position="437"/>
    </location>
</feature>
<feature type="helix" evidence="11">
    <location>
        <begin position="440"/>
        <end position="443"/>
    </location>
</feature>
<feature type="strand" evidence="11">
    <location>
        <begin position="444"/>
        <end position="446"/>
    </location>
</feature>
<feature type="helix" evidence="11">
    <location>
        <begin position="447"/>
        <end position="459"/>
    </location>
</feature>
<feature type="strand" evidence="11">
    <location>
        <begin position="463"/>
        <end position="467"/>
    </location>
</feature>
<feature type="helix" evidence="11">
    <location>
        <begin position="484"/>
        <end position="490"/>
    </location>
</feature>
<feature type="strand" evidence="11">
    <location>
        <begin position="495"/>
        <end position="497"/>
    </location>
</feature>
<feature type="helix" evidence="11">
    <location>
        <begin position="505"/>
        <end position="508"/>
    </location>
</feature>
<feature type="strand" evidence="11">
    <location>
        <begin position="511"/>
        <end position="513"/>
    </location>
</feature>
<feature type="strand" evidence="11">
    <location>
        <begin position="517"/>
        <end position="520"/>
    </location>
</feature>
<feature type="strand" evidence="11">
    <location>
        <begin position="522"/>
        <end position="526"/>
    </location>
</feature>
<feature type="helix" evidence="11">
    <location>
        <begin position="656"/>
        <end position="660"/>
    </location>
</feature>
<feature type="strand" evidence="11">
    <location>
        <begin position="663"/>
        <end position="668"/>
    </location>
</feature>
<feature type="helix" evidence="11">
    <location>
        <begin position="674"/>
        <end position="680"/>
    </location>
</feature>
<feature type="helix" evidence="11">
    <location>
        <begin position="685"/>
        <end position="696"/>
    </location>
</feature>
<feature type="strand" evidence="11">
    <location>
        <begin position="703"/>
        <end position="705"/>
    </location>
</feature>
<feature type="helix" evidence="11">
    <location>
        <begin position="706"/>
        <end position="715"/>
    </location>
</feature>
<feature type="strand" evidence="11">
    <location>
        <begin position="716"/>
        <end position="723"/>
    </location>
</feature>
<feature type="helix" evidence="11">
    <location>
        <begin position="724"/>
        <end position="732"/>
    </location>
</feature>
<feature type="strand" evidence="11">
    <location>
        <begin position="737"/>
        <end position="739"/>
    </location>
</feature>
<feature type="strand" evidence="11">
    <location>
        <begin position="747"/>
        <end position="749"/>
    </location>
</feature>
<feature type="strand" evidence="11">
    <location>
        <begin position="752"/>
        <end position="754"/>
    </location>
</feature>
<feature type="helix" evidence="11">
    <location>
        <begin position="760"/>
        <end position="772"/>
    </location>
</feature>
<feature type="helix" evidence="11">
    <location>
        <begin position="775"/>
        <end position="784"/>
    </location>
</feature>
<keyword id="KW-0002">3D-structure</keyword>
<keyword id="KW-1003">Cell membrane</keyword>
<keyword id="KW-0966">Cell projection</keyword>
<keyword id="KW-0325">Glycoprotein</keyword>
<keyword id="KW-0407">Ion channel</keyword>
<keyword id="KW-0406">Ion transport</keyword>
<keyword id="KW-1071">Ligand-gated ion channel</keyword>
<keyword id="KW-0472">Membrane</keyword>
<keyword id="KW-0628">Postsynaptic cell membrane</keyword>
<keyword id="KW-0675">Receptor</keyword>
<keyword id="KW-1185">Reference proteome</keyword>
<keyword id="KW-0732">Signal</keyword>
<keyword id="KW-0770">Synapse</keyword>
<keyword id="KW-0812">Transmembrane</keyword>
<keyword id="KW-1133">Transmembrane helix</keyword>
<keyword id="KW-0813">Transport</keyword>
<accession>Q01812</accession>
<accession>Q62642</accession>
<name>GRIK4_RAT</name>
<comment type="function">
    <text evidence="5 6 8">Ionotropic glutamate receptor that functions as a cation-permeable ligand-gated ion channel, gated by L-glutamate and the glutamatergic agonist kainic acid. Cannot form functional channels on its own and shows channel activity only in heteromeric assembly with GRIK1, GRIK2 and GRIK3 subunits.</text>
</comment>
<comment type="subunit">
    <text evidence="6 7 8">Homodimer (PubMed:27524200). Can form functional heteromeric receptors with GRIK1, GRIK2 and GRIK3 (PubMed:25139762, PubMed:9390526).</text>
</comment>
<comment type="subcellular location">
    <subcellularLocation>
        <location evidence="1">Cell membrane</location>
        <topology evidence="3">Multi-pass membrane protein</topology>
    </subcellularLocation>
    <subcellularLocation>
        <location evidence="2">Postsynaptic cell membrane</location>
        <topology evidence="3">Multi-pass membrane protein</topology>
    </subcellularLocation>
    <subcellularLocation>
        <location evidence="2">Presynaptic cell membrane</location>
        <topology evidence="3">Multi-pass membrane protein</topology>
    </subcellularLocation>
</comment>
<comment type="tissue specificity">
    <text evidence="5">Strong expression in hippocampal CA3 pyramidal cells. Low expression in hippocampal dentate granule cells, in layers II, V and VI of the cortex, and in cerebellar Purkinje cells. No expression in the striatum, reticular thalamus, hypothalamus or amygdaloid complex.</text>
</comment>
<comment type="developmental stage">
    <text evidence="5">Expressed at embryonic day 15 in brain and spinal cord. At embryonic day 19 expression accumulates in the hippocampal formation. Prominent expression in the subicular cortex at postnatal days P1, P8 and P15 but then markedly reduced in the adult.</text>
</comment>
<comment type="similarity">
    <text evidence="9">Belongs to the glutamate-gated ion channel (TC 1.A.10.1) family. GRIK4 subfamily.</text>
</comment>